<reference key="1">
    <citation type="journal article" date="2012" name="Stand. Genomic Sci.">
        <title>Complete genome sequence of Polynucleobacter necessarius subsp. asymbioticus type strain (QLW-P1DMWA-1(T)).</title>
        <authorList>
            <person name="Meincke L."/>
            <person name="Copeland A."/>
            <person name="Lapidus A."/>
            <person name="Lucas S."/>
            <person name="Berry K.W."/>
            <person name="Del Rio T.G."/>
            <person name="Hammon N."/>
            <person name="Dalin E."/>
            <person name="Tice H."/>
            <person name="Pitluck S."/>
            <person name="Richardson P."/>
            <person name="Bruce D."/>
            <person name="Goodwin L."/>
            <person name="Han C."/>
            <person name="Tapia R."/>
            <person name="Detter J.C."/>
            <person name="Schmutz J."/>
            <person name="Brettin T."/>
            <person name="Larimer F."/>
            <person name="Land M."/>
            <person name="Hauser L."/>
            <person name="Kyrpides N.C."/>
            <person name="Ivanova N."/>
            <person name="Goker M."/>
            <person name="Woyke T."/>
            <person name="Wu Q.L."/>
            <person name="Pockl M."/>
            <person name="Hahn M.W."/>
            <person name="Klenk H.P."/>
        </authorList>
    </citation>
    <scope>NUCLEOTIDE SEQUENCE [LARGE SCALE GENOMIC DNA]</scope>
    <source>
        <strain>DSM 18221 / CIP 109841 / QLW-P1DMWA-1</strain>
    </source>
</reference>
<organism>
    <name type="scientific">Polynucleobacter asymbioticus (strain DSM 18221 / CIP 109841 / QLW-P1DMWA-1)</name>
    <name type="common">Polynucleobacter necessarius subsp. asymbioticus</name>
    <dbReference type="NCBI Taxonomy" id="312153"/>
    <lineage>
        <taxon>Bacteria</taxon>
        <taxon>Pseudomonadati</taxon>
        <taxon>Pseudomonadota</taxon>
        <taxon>Betaproteobacteria</taxon>
        <taxon>Burkholderiales</taxon>
        <taxon>Burkholderiaceae</taxon>
        <taxon>Polynucleobacter</taxon>
    </lineage>
</organism>
<gene>
    <name evidence="1" type="primary">fabH</name>
    <name type="ordered locus">Pnuc_0398</name>
</gene>
<evidence type="ECO:0000255" key="1">
    <source>
        <dbReference type="HAMAP-Rule" id="MF_01815"/>
    </source>
</evidence>
<accession>A4SVV4</accession>
<proteinExistence type="inferred from homology"/>
<name>FABH_POLAQ</name>
<feature type="chain" id="PRO_1000088317" description="Beta-ketoacyl-[acyl-carrier-protein] synthase III">
    <location>
        <begin position="1"/>
        <end position="328"/>
    </location>
</feature>
<feature type="region of interest" description="ACP-binding" evidence="1">
    <location>
        <begin position="256"/>
        <end position="260"/>
    </location>
</feature>
<feature type="active site" evidence="1">
    <location>
        <position position="122"/>
    </location>
</feature>
<feature type="active site" evidence="1">
    <location>
        <position position="255"/>
    </location>
</feature>
<feature type="active site" evidence="1">
    <location>
        <position position="285"/>
    </location>
</feature>
<sequence length="328" mass="34421">MSIFSRIAGTGSYLPELRLTNQDLVERLAKTGLETSDEWIATRSGISARHFAAENELTSDLALKAAQAALSSAGITSSDLDLIILATSTPDHLGGFPSTACVVQDKLGAHTACAAFDVQAVCAGFTYALATADAFIRTGSYKKVLVIGAETFSRILDFQDRGTCVLFGDGAGAVVLEASSEPGILSTALHADGSQRDILCVPGRSGNGAVHGSPFMTMDGQAVFKLAVKVLEQVAHEVLAKANLKPEQIDWLVPHQANIRIMEGTAKKMGMSMDKVIVTVHEHGNTSAASIPLALDCGIRSGQIQRGQHLLLEGVGGGFAWGAVALKY</sequence>
<protein>
    <recommendedName>
        <fullName evidence="1">Beta-ketoacyl-[acyl-carrier-protein] synthase III</fullName>
        <shortName evidence="1">Beta-ketoacyl-ACP synthase III</shortName>
        <shortName evidence="1">KAS III</shortName>
        <ecNumber evidence="1">2.3.1.180</ecNumber>
    </recommendedName>
    <alternativeName>
        <fullName evidence="1">3-oxoacyl-[acyl-carrier-protein] synthase 3</fullName>
    </alternativeName>
    <alternativeName>
        <fullName evidence="1">3-oxoacyl-[acyl-carrier-protein] synthase III</fullName>
    </alternativeName>
</protein>
<keyword id="KW-0012">Acyltransferase</keyword>
<keyword id="KW-0963">Cytoplasm</keyword>
<keyword id="KW-0275">Fatty acid biosynthesis</keyword>
<keyword id="KW-0276">Fatty acid metabolism</keyword>
<keyword id="KW-0444">Lipid biosynthesis</keyword>
<keyword id="KW-0443">Lipid metabolism</keyword>
<keyword id="KW-0511">Multifunctional enzyme</keyword>
<keyword id="KW-1185">Reference proteome</keyword>
<keyword id="KW-0808">Transferase</keyword>
<comment type="function">
    <text evidence="1">Catalyzes the condensation reaction of fatty acid synthesis by the addition to an acyl acceptor of two carbons from malonyl-ACP. Catalyzes the first condensation reaction which initiates fatty acid synthesis and may therefore play a role in governing the total rate of fatty acid production. Possesses both acetoacetyl-ACP synthase and acetyl transacylase activities. Its substrate specificity determines the biosynthesis of branched-chain and/or straight-chain of fatty acids.</text>
</comment>
<comment type="catalytic activity">
    <reaction evidence="1">
        <text>malonyl-[ACP] + acetyl-CoA + H(+) = 3-oxobutanoyl-[ACP] + CO2 + CoA</text>
        <dbReference type="Rhea" id="RHEA:12080"/>
        <dbReference type="Rhea" id="RHEA-COMP:9623"/>
        <dbReference type="Rhea" id="RHEA-COMP:9625"/>
        <dbReference type="ChEBI" id="CHEBI:15378"/>
        <dbReference type="ChEBI" id="CHEBI:16526"/>
        <dbReference type="ChEBI" id="CHEBI:57287"/>
        <dbReference type="ChEBI" id="CHEBI:57288"/>
        <dbReference type="ChEBI" id="CHEBI:78449"/>
        <dbReference type="ChEBI" id="CHEBI:78450"/>
        <dbReference type="EC" id="2.3.1.180"/>
    </reaction>
</comment>
<comment type="pathway">
    <text evidence="1">Lipid metabolism; fatty acid biosynthesis.</text>
</comment>
<comment type="subunit">
    <text evidence="1">Homodimer.</text>
</comment>
<comment type="subcellular location">
    <subcellularLocation>
        <location evidence="1">Cytoplasm</location>
    </subcellularLocation>
</comment>
<comment type="domain">
    <text evidence="1">The last Arg residue of the ACP-binding site is essential for the weak association between ACP/AcpP and FabH.</text>
</comment>
<comment type="similarity">
    <text evidence="1">Belongs to the thiolase-like superfamily. FabH family.</text>
</comment>
<dbReference type="EC" id="2.3.1.180" evidence="1"/>
<dbReference type="EMBL" id="CP000655">
    <property type="protein sequence ID" value="ABP33618.1"/>
    <property type="molecule type" value="Genomic_DNA"/>
</dbReference>
<dbReference type="RefSeq" id="WP_011902243.1">
    <property type="nucleotide sequence ID" value="NC_009379.1"/>
</dbReference>
<dbReference type="SMR" id="A4SVV4"/>
<dbReference type="GeneID" id="31480749"/>
<dbReference type="KEGG" id="pnu:Pnuc_0398"/>
<dbReference type="eggNOG" id="COG0332">
    <property type="taxonomic scope" value="Bacteria"/>
</dbReference>
<dbReference type="HOGENOM" id="CLU_039592_3_1_4"/>
<dbReference type="UniPathway" id="UPA00094"/>
<dbReference type="Proteomes" id="UP000000231">
    <property type="component" value="Chromosome"/>
</dbReference>
<dbReference type="GO" id="GO:0005737">
    <property type="term" value="C:cytoplasm"/>
    <property type="evidence" value="ECO:0007669"/>
    <property type="project" value="UniProtKB-SubCell"/>
</dbReference>
<dbReference type="GO" id="GO:0004315">
    <property type="term" value="F:3-oxoacyl-[acyl-carrier-protein] synthase activity"/>
    <property type="evidence" value="ECO:0007669"/>
    <property type="project" value="InterPro"/>
</dbReference>
<dbReference type="GO" id="GO:0033818">
    <property type="term" value="F:beta-ketoacyl-acyl-carrier-protein synthase III activity"/>
    <property type="evidence" value="ECO:0007669"/>
    <property type="project" value="UniProtKB-UniRule"/>
</dbReference>
<dbReference type="GO" id="GO:0006633">
    <property type="term" value="P:fatty acid biosynthetic process"/>
    <property type="evidence" value="ECO:0007669"/>
    <property type="project" value="UniProtKB-UniRule"/>
</dbReference>
<dbReference type="GO" id="GO:0044550">
    <property type="term" value="P:secondary metabolite biosynthetic process"/>
    <property type="evidence" value="ECO:0007669"/>
    <property type="project" value="TreeGrafter"/>
</dbReference>
<dbReference type="CDD" id="cd00830">
    <property type="entry name" value="KAS_III"/>
    <property type="match status" value="1"/>
</dbReference>
<dbReference type="FunFam" id="3.40.47.10:FF:000004">
    <property type="entry name" value="3-oxoacyl-[acyl-carrier-protein] synthase 3"/>
    <property type="match status" value="1"/>
</dbReference>
<dbReference type="Gene3D" id="3.40.47.10">
    <property type="match status" value="1"/>
</dbReference>
<dbReference type="HAMAP" id="MF_01815">
    <property type="entry name" value="FabH"/>
    <property type="match status" value="1"/>
</dbReference>
<dbReference type="InterPro" id="IPR013747">
    <property type="entry name" value="ACP_syn_III_C"/>
</dbReference>
<dbReference type="InterPro" id="IPR013751">
    <property type="entry name" value="ACP_syn_III_N"/>
</dbReference>
<dbReference type="InterPro" id="IPR004655">
    <property type="entry name" value="FabH"/>
</dbReference>
<dbReference type="InterPro" id="IPR016039">
    <property type="entry name" value="Thiolase-like"/>
</dbReference>
<dbReference type="NCBIfam" id="TIGR00747">
    <property type="entry name" value="fabH"/>
    <property type="match status" value="1"/>
</dbReference>
<dbReference type="NCBIfam" id="NF006829">
    <property type="entry name" value="PRK09352.1"/>
    <property type="match status" value="1"/>
</dbReference>
<dbReference type="PANTHER" id="PTHR34069">
    <property type="entry name" value="3-OXOACYL-[ACYL-CARRIER-PROTEIN] SYNTHASE 3"/>
    <property type="match status" value="1"/>
</dbReference>
<dbReference type="PANTHER" id="PTHR34069:SF2">
    <property type="entry name" value="BETA-KETOACYL-[ACYL-CARRIER-PROTEIN] SYNTHASE III"/>
    <property type="match status" value="1"/>
</dbReference>
<dbReference type="Pfam" id="PF08545">
    <property type="entry name" value="ACP_syn_III"/>
    <property type="match status" value="1"/>
</dbReference>
<dbReference type="Pfam" id="PF08541">
    <property type="entry name" value="ACP_syn_III_C"/>
    <property type="match status" value="1"/>
</dbReference>
<dbReference type="SUPFAM" id="SSF53901">
    <property type="entry name" value="Thiolase-like"/>
    <property type="match status" value="1"/>
</dbReference>